<feature type="chain" id="PRO_0000365403" description="Eukaryotic translation initiation factor 3 subunit G">
    <location>
        <begin position="1"/>
        <end position="272"/>
    </location>
</feature>
<feature type="domain" description="RRM" evidence="1">
    <location>
        <begin position="190"/>
        <end position="268"/>
    </location>
</feature>
<feature type="region of interest" description="Disordered" evidence="2">
    <location>
        <begin position="1"/>
        <end position="28"/>
    </location>
</feature>
<feature type="region of interest" description="Disordered" evidence="2">
    <location>
        <begin position="157"/>
        <end position="188"/>
    </location>
</feature>
<gene>
    <name evidence="1" type="primary">eIF3-S4-1</name>
    <name type="ORF">AAEL006851</name>
</gene>
<gene>
    <name evidence="1" type="primary">eIF3-S4-2</name>
    <name type="ORF">AAEL012661</name>
</gene>
<proteinExistence type="evidence at transcript level"/>
<keyword id="KW-0963">Cytoplasm</keyword>
<keyword id="KW-0396">Initiation factor</keyword>
<keyword id="KW-0648">Protein biosynthesis</keyword>
<keyword id="KW-1185">Reference proteome</keyword>
<keyword id="KW-0694">RNA-binding</keyword>
<accession>Q1HQN4</accession>
<protein>
    <recommendedName>
        <fullName evidence="1">Eukaryotic translation initiation factor 3 subunit G</fullName>
        <shortName evidence="1">eIF3g</shortName>
    </recommendedName>
    <alternativeName>
        <fullName evidence="1">Eukaryotic translation initiation factor 3 RNA-binding subunit</fullName>
        <shortName evidence="1">eIF-3 RNA-binding subunit</shortName>
    </alternativeName>
    <alternativeName>
        <fullName evidence="1">Eukaryotic translation initiation factor 3 subunit 4</fullName>
    </alternativeName>
</protein>
<reference key="1">
    <citation type="journal article" date="2007" name="BMC Genomics">
        <title>An annotated catalogue of salivary gland transcripts in the adult female mosquito, Aedes aegypti.</title>
        <authorList>
            <person name="Ribeiro J.M.C."/>
            <person name="Arca B."/>
            <person name="Lombardo F."/>
            <person name="Calvo E."/>
            <person name="Phan V.M."/>
            <person name="Chandra P.K."/>
            <person name="Wikel S.K."/>
        </authorList>
    </citation>
    <scope>NUCLEOTIDE SEQUENCE [LARGE SCALE MRNA]</scope>
    <source>
        <strain>Black-eyed Liverpool</strain>
        <tissue>Salivary gland</tissue>
    </source>
</reference>
<reference key="2">
    <citation type="journal article" date="2007" name="Science">
        <title>Genome sequence of Aedes aegypti, a major arbovirus vector.</title>
        <authorList>
            <person name="Nene V."/>
            <person name="Wortman J.R."/>
            <person name="Lawson D."/>
            <person name="Haas B.J."/>
            <person name="Kodira C.D."/>
            <person name="Tu Z.J."/>
            <person name="Loftus B.J."/>
            <person name="Xi Z."/>
            <person name="Megy K."/>
            <person name="Grabherr M."/>
            <person name="Ren Q."/>
            <person name="Zdobnov E.M."/>
            <person name="Lobo N.F."/>
            <person name="Campbell K.S."/>
            <person name="Brown S.E."/>
            <person name="Bonaldo M.F."/>
            <person name="Zhu J."/>
            <person name="Sinkins S.P."/>
            <person name="Hogenkamp D.G."/>
            <person name="Amedeo P."/>
            <person name="Arensburger P."/>
            <person name="Atkinson P.W."/>
            <person name="Bidwell S.L."/>
            <person name="Biedler J."/>
            <person name="Birney E."/>
            <person name="Bruggner R.V."/>
            <person name="Costas J."/>
            <person name="Coy M.R."/>
            <person name="Crabtree J."/>
            <person name="Crawford M."/>
            <person name="DeBruyn B."/>
            <person name="DeCaprio D."/>
            <person name="Eiglmeier K."/>
            <person name="Eisenstadt E."/>
            <person name="El-Dorry H."/>
            <person name="Gelbart W.M."/>
            <person name="Gomes S.L."/>
            <person name="Hammond M."/>
            <person name="Hannick L.I."/>
            <person name="Hogan J.R."/>
            <person name="Holmes M.H."/>
            <person name="Jaffe D."/>
            <person name="Johnston S.J."/>
            <person name="Kennedy R.C."/>
            <person name="Koo H."/>
            <person name="Kravitz S."/>
            <person name="Kriventseva E.V."/>
            <person name="Kulp D."/>
            <person name="Labutti K."/>
            <person name="Lee E."/>
            <person name="Li S."/>
            <person name="Lovin D.D."/>
            <person name="Mao C."/>
            <person name="Mauceli E."/>
            <person name="Menck C.F."/>
            <person name="Miller J.R."/>
            <person name="Montgomery P."/>
            <person name="Mori A."/>
            <person name="Nascimento A.L."/>
            <person name="Naveira H.F."/>
            <person name="Nusbaum C."/>
            <person name="O'Leary S.B."/>
            <person name="Orvis J."/>
            <person name="Pertea M."/>
            <person name="Quesneville H."/>
            <person name="Reidenbach K.R."/>
            <person name="Rogers Y.-H.C."/>
            <person name="Roth C.W."/>
            <person name="Schneider J.R."/>
            <person name="Schatz M."/>
            <person name="Shumway M."/>
            <person name="Stanke M."/>
            <person name="Stinson E.O."/>
            <person name="Tubio J.M.C."/>
            <person name="Vanzee J.P."/>
            <person name="Verjovski-Almeida S."/>
            <person name="Werner D."/>
            <person name="White O.R."/>
            <person name="Wyder S."/>
            <person name="Zeng Q."/>
            <person name="Zhao Q."/>
            <person name="Zhao Y."/>
            <person name="Hill C.A."/>
            <person name="Raikhel A.S."/>
            <person name="Soares M.B."/>
            <person name="Knudson D.L."/>
            <person name="Lee N.H."/>
            <person name="Galagan J."/>
            <person name="Salzberg S.L."/>
            <person name="Paulsen I.T."/>
            <person name="Dimopoulos G."/>
            <person name="Collins F.H."/>
            <person name="Bruce B."/>
            <person name="Fraser-Liggett C.M."/>
            <person name="Severson D.W."/>
        </authorList>
    </citation>
    <scope>NUCLEOTIDE SEQUENCE [LARGE SCALE GENOMIC DNA]</scope>
    <source>
        <strain>LVPib12</strain>
    </source>
</reference>
<name>EIF3G_AEDAE</name>
<dbReference type="EMBL" id="DQ440410">
    <property type="protein sequence ID" value="ABF18443.1"/>
    <property type="molecule type" value="mRNA"/>
</dbReference>
<dbReference type="EMBL" id="CH477408">
    <property type="protein sequence ID" value="EAT41538.1"/>
    <property type="molecule type" value="Genomic_DNA"/>
</dbReference>
<dbReference type="EMBL" id="CH477907">
    <property type="protein sequence ID" value="EAT35152.1"/>
    <property type="molecule type" value="Genomic_DNA"/>
</dbReference>
<dbReference type="RefSeq" id="XP_001662784.1">
    <property type="nucleotide sequence ID" value="XM_001662734.1"/>
</dbReference>
<dbReference type="SMR" id="Q1HQN4"/>
<dbReference type="FunCoup" id="Q1HQN4">
    <property type="interactions" value="1640"/>
</dbReference>
<dbReference type="STRING" id="7159.Q1HQN4"/>
<dbReference type="PaxDb" id="7159-AAEL006851-PA"/>
<dbReference type="EnsemblMetazoa" id="AAEL012661-RB">
    <property type="protein sequence ID" value="AAEL012661-PB"/>
    <property type="gene ID" value="AAEL012661"/>
</dbReference>
<dbReference type="GeneID" id="5568436"/>
<dbReference type="KEGG" id="aag:5568436"/>
<dbReference type="CTD" id="31243"/>
<dbReference type="VEuPathDB" id="VectorBase:AAEL012661"/>
<dbReference type="eggNOG" id="KOG0122">
    <property type="taxonomic scope" value="Eukaryota"/>
</dbReference>
<dbReference type="HOGENOM" id="CLU_034595_0_0_1"/>
<dbReference type="InParanoid" id="Q1HQN4"/>
<dbReference type="OMA" id="ICQGDHF"/>
<dbReference type="OrthoDB" id="639027at2759"/>
<dbReference type="PhylomeDB" id="Q1HQN4"/>
<dbReference type="Proteomes" id="UP000008820">
    <property type="component" value="Chromosome 2"/>
</dbReference>
<dbReference type="Proteomes" id="UP000682892">
    <property type="component" value="Unassembled WGS sequence"/>
</dbReference>
<dbReference type="GO" id="GO:0016282">
    <property type="term" value="C:eukaryotic 43S preinitiation complex"/>
    <property type="evidence" value="ECO:0007669"/>
    <property type="project" value="UniProtKB-UniRule"/>
</dbReference>
<dbReference type="GO" id="GO:0033290">
    <property type="term" value="C:eukaryotic 48S preinitiation complex"/>
    <property type="evidence" value="ECO:0007669"/>
    <property type="project" value="UniProtKB-UniRule"/>
</dbReference>
<dbReference type="GO" id="GO:0005852">
    <property type="term" value="C:eukaryotic translation initiation factor 3 complex"/>
    <property type="evidence" value="ECO:0007669"/>
    <property type="project" value="UniProtKB-UniRule"/>
</dbReference>
<dbReference type="GO" id="GO:0003723">
    <property type="term" value="F:RNA binding"/>
    <property type="evidence" value="ECO:0007669"/>
    <property type="project" value="UniProtKB-UniRule"/>
</dbReference>
<dbReference type="GO" id="GO:0003743">
    <property type="term" value="F:translation initiation factor activity"/>
    <property type="evidence" value="ECO:0007669"/>
    <property type="project" value="UniProtKB-UniRule"/>
</dbReference>
<dbReference type="GO" id="GO:0001732">
    <property type="term" value="P:formation of cytoplasmic translation initiation complex"/>
    <property type="evidence" value="ECO:0007669"/>
    <property type="project" value="UniProtKB-UniRule"/>
</dbReference>
<dbReference type="CDD" id="cd12933">
    <property type="entry name" value="eIF3G"/>
    <property type="match status" value="1"/>
</dbReference>
<dbReference type="CDD" id="cd12408">
    <property type="entry name" value="RRM_eIF3G_like"/>
    <property type="match status" value="1"/>
</dbReference>
<dbReference type="FunFam" id="3.30.70.330:FF:000828">
    <property type="entry name" value="Eukaryotic translation initiation factor 3 subunit G"/>
    <property type="match status" value="1"/>
</dbReference>
<dbReference type="Gene3D" id="3.30.70.330">
    <property type="match status" value="1"/>
</dbReference>
<dbReference type="HAMAP" id="MF_03006">
    <property type="entry name" value="eIF3g"/>
    <property type="match status" value="1"/>
</dbReference>
<dbReference type="InterPro" id="IPR017334">
    <property type="entry name" value="eIF3_g"/>
</dbReference>
<dbReference type="InterPro" id="IPR024675">
    <property type="entry name" value="eIF3g_N"/>
</dbReference>
<dbReference type="InterPro" id="IPR034240">
    <property type="entry name" value="eIF3G_RRM"/>
</dbReference>
<dbReference type="InterPro" id="IPR012677">
    <property type="entry name" value="Nucleotide-bd_a/b_plait_sf"/>
</dbReference>
<dbReference type="InterPro" id="IPR035979">
    <property type="entry name" value="RBD_domain_sf"/>
</dbReference>
<dbReference type="InterPro" id="IPR000504">
    <property type="entry name" value="RRM_dom"/>
</dbReference>
<dbReference type="PANTHER" id="PTHR10352">
    <property type="entry name" value="EUKARYOTIC TRANSLATION INITIATION FACTOR 3 SUBUNIT G"/>
    <property type="match status" value="1"/>
</dbReference>
<dbReference type="Pfam" id="PF12353">
    <property type="entry name" value="eIF3g"/>
    <property type="match status" value="1"/>
</dbReference>
<dbReference type="Pfam" id="PF00076">
    <property type="entry name" value="RRM_1"/>
    <property type="match status" value="1"/>
</dbReference>
<dbReference type="PIRSF" id="PIRSF037949">
    <property type="entry name" value="Transl_init_eIF-3_RNA-bind"/>
    <property type="match status" value="1"/>
</dbReference>
<dbReference type="SMART" id="SM00360">
    <property type="entry name" value="RRM"/>
    <property type="match status" value="1"/>
</dbReference>
<dbReference type="SUPFAM" id="SSF54928">
    <property type="entry name" value="RNA-binding domain, RBD"/>
    <property type="match status" value="1"/>
</dbReference>
<dbReference type="PROSITE" id="PS50102">
    <property type="entry name" value="RRM"/>
    <property type="match status" value="1"/>
</dbReference>
<sequence length="272" mass="30363">MPALDEIKSSWADEVELDSGSLPPPTEIIENGQKIVTEYKYNKDDKKVKVVRTYKITRLVVPKSIAMRKNWSKFGDSSNDKPGPNPQTTMVSEDVYMQFVSNKEEEQKSDNALDSLKNIAKCRICEGEHWSLSCPYKGTAYEAGKAKPVVPVQQEMAPTTAKSGKYVPPSMRDSQKPGMGGNPRGRDDTTAIRISNLSEAMTEADLEELVKKIGPHSKMFLARDKNTGLCKGFAYVHFKSRRDAATAIELLNGHGYDHLILNVEWSKPQNPQ</sequence>
<organism>
    <name type="scientific">Aedes aegypti</name>
    <name type="common">Yellowfever mosquito</name>
    <name type="synonym">Culex aegypti</name>
    <dbReference type="NCBI Taxonomy" id="7159"/>
    <lineage>
        <taxon>Eukaryota</taxon>
        <taxon>Metazoa</taxon>
        <taxon>Ecdysozoa</taxon>
        <taxon>Arthropoda</taxon>
        <taxon>Hexapoda</taxon>
        <taxon>Insecta</taxon>
        <taxon>Pterygota</taxon>
        <taxon>Neoptera</taxon>
        <taxon>Endopterygota</taxon>
        <taxon>Diptera</taxon>
        <taxon>Nematocera</taxon>
        <taxon>Culicoidea</taxon>
        <taxon>Culicidae</taxon>
        <taxon>Culicinae</taxon>
        <taxon>Aedini</taxon>
        <taxon>Aedes</taxon>
        <taxon>Stegomyia</taxon>
    </lineage>
</organism>
<evidence type="ECO:0000255" key="1">
    <source>
        <dbReference type="HAMAP-Rule" id="MF_03006"/>
    </source>
</evidence>
<evidence type="ECO:0000256" key="2">
    <source>
        <dbReference type="SAM" id="MobiDB-lite"/>
    </source>
</evidence>
<comment type="function">
    <text evidence="1">RNA-binding component of the eukaryotic translation initiation factor 3 (eIF-3) complex, which is involved in protein synthesis of a specialized repertoire of mRNAs and, together with other initiation factors, stimulates binding of mRNA and methionyl-tRNAi to the 40S ribosome. The eIF-3 complex specifically targets and initiates translation of a subset of mRNAs involved in cell proliferation. This subunit can bind 18S rRNA.</text>
</comment>
<comment type="subunit">
    <text evidence="1">Component of the eukaryotic translation initiation factor 3 (eIF-3) complex.</text>
</comment>
<comment type="subcellular location">
    <subcellularLocation>
        <location evidence="1">Cytoplasm</location>
    </subcellularLocation>
</comment>
<comment type="similarity">
    <text evidence="1">Belongs to the eIF-3 subunit G family.</text>
</comment>